<name>CKI4_ORYSJ</name>
<accession>Q75J39</accession>
<accession>Q948R7</accession>
<reference key="1">
    <citation type="submission" date="2001-03" db="EMBL/GenBank/DDBJ databases">
        <title>OsCR4.</title>
        <authorList>
            <person name="Kawata M."/>
            <person name="Oikawa T."/>
            <person name="Matsumura Y."/>
            <person name="Fukumoto F."/>
            <person name="Kawasaki S."/>
            <person name="Takaiwa F."/>
            <person name="Kuroda S."/>
        </authorList>
    </citation>
    <scope>NUCLEOTIDE SEQUENCE [GENOMIC DNA]</scope>
</reference>
<reference key="2">
    <citation type="journal article" date="2005" name="Genome Res.">
        <title>Sequence, annotation, and analysis of synteny between rice chromosome 3 and diverged grass species.</title>
        <authorList>
            <consortium name="The rice chromosome 3 sequencing consortium"/>
            <person name="Buell C.R."/>
            <person name="Yuan Q."/>
            <person name="Ouyang S."/>
            <person name="Liu J."/>
            <person name="Zhu W."/>
            <person name="Wang A."/>
            <person name="Maiti R."/>
            <person name="Haas B."/>
            <person name="Wortman J."/>
            <person name="Pertea M."/>
            <person name="Jones K.M."/>
            <person name="Kim M."/>
            <person name="Overton L."/>
            <person name="Tsitrin T."/>
            <person name="Fadrosh D."/>
            <person name="Bera J."/>
            <person name="Weaver B."/>
            <person name="Jin S."/>
            <person name="Johri S."/>
            <person name="Reardon M."/>
            <person name="Webb K."/>
            <person name="Hill J."/>
            <person name="Moffat K."/>
            <person name="Tallon L."/>
            <person name="Van Aken S."/>
            <person name="Lewis M."/>
            <person name="Utterback T."/>
            <person name="Feldblyum T."/>
            <person name="Zismann V."/>
            <person name="Iobst S."/>
            <person name="Hsiao J."/>
            <person name="de Vazeille A.R."/>
            <person name="Salzberg S.L."/>
            <person name="White O."/>
            <person name="Fraser C.M."/>
            <person name="Yu Y."/>
            <person name="Kim H."/>
            <person name="Rambo T."/>
            <person name="Currie J."/>
            <person name="Collura K."/>
            <person name="Kernodle-Thompson S."/>
            <person name="Wei F."/>
            <person name="Kudrna K."/>
            <person name="Ammiraju J.S.S."/>
            <person name="Luo M."/>
            <person name="Goicoechea J.L."/>
            <person name="Wing R.A."/>
            <person name="Henry D."/>
            <person name="Oates R."/>
            <person name="Palmer M."/>
            <person name="Pries G."/>
            <person name="Saski C."/>
            <person name="Simmons J."/>
            <person name="Soderlund C."/>
            <person name="Nelson W."/>
            <person name="de la Bastide M."/>
            <person name="Spiegel L."/>
            <person name="Nascimento L."/>
            <person name="Huang E."/>
            <person name="Preston R."/>
            <person name="Zutavern T."/>
            <person name="Palmer L."/>
            <person name="O'Shaughnessy A."/>
            <person name="Dike S."/>
            <person name="McCombie W.R."/>
            <person name="Minx P."/>
            <person name="Cordum H."/>
            <person name="Wilson R."/>
            <person name="Jin W."/>
            <person name="Lee H.R."/>
            <person name="Jiang J."/>
            <person name="Jackson S."/>
        </authorList>
    </citation>
    <scope>NUCLEOTIDE SEQUENCE [LARGE SCALE GENOMIC DNA]</scope>
    <source>
        <strain>cv. Nipponbare</strain>
    </source>
</reference>
<reference key="3">
    <citation type="journal article" date="2005" name="Nature">
        <title>The map-based sequence of the rice genome.</title>
        <authorList>
            <consortium name="International rice genome sequencing project (IRGSP)"/>
        </authorList>
    </citation>
    <scope>NUCLEOTIDE SEQUENCE [LARGE SCALE GENOMIC DNA]</scope>
    <source>
        <strain>cv. Nipponbare</strain>
    </source>
</reference>
<reference key="4">
    <citation type="journal article" date="2008" name="Nucleic Acids Res.">
        <title>The rice annotation project database (RAP-DB): 2008 update.</title>
        <authorList>
            <consortium name="The rice annotation project (RAP)"/>
        </authorList>
    </citation>
    <scope>GENOME REANNOTATION</scope>
    <source>
        <strain>cv. Nipponbare</strain>
    </source>
</reference>
<reference key="5">
    <citation type="journal article" date="2013" name="Rice">
        <title>Improvement of the Oryza sativa Nipponbare reference genome using next generation sequence and optical map data.</title>
        <authorList>
            <person name="Kawahara Y."/>
            <person name="de la Bastide M."/>
            <person name="Hamilton J.P."/>
            <person name="Kanamori H."/>
            <person name="McCombie W.R."/>
            <person name="Ouyang S."/>
            <person name="Schwartz D.C."/>
            <person name="Tanaka T."/>
            <person name="Wu J."/>
            <person name="Zhou S."/>
            <person name="Childs K.L."/>
            <person name="Davidson R.M."/>
            <person name="Lin H."/>
            <person name="Quesada-Ocampo L."/>
            <person name="Vaillancourt B."/>
            <person name="Sakai H."/>
            <person name="Lee S.S."/>
            <person name="Kim J."/>
            <person name="Numa H."/>
            <person name="Itoh T."/>
            <person name="Buell C.R."/>
            <person name="Matsumoto T."/>
        </authorList>
    </citation>
    <scope>GENOME REANNOTATION</scope>
    <source>
        <strain>cv. Nipponbare</strain>
    </source>
</reference>
<reference key="6">
    <citation type="journal article" date="2005" name="Planta">
        <title>Molecular analysis of the CRINKLY4 gene family in Arabidopsis thaliana.</title>
        <authorList>
            <person name="Cao X."/>
            <person name="Li K."/>
            <person name="Suh S.-G."/>
            <person name="Guo T."/>
            <person name="Becraft P.W."/>
        </authorList>
    </citation>
    <scope>IDENTIFICATION</scope>
</reference>
<reference key="7">
    <citation type="journal article" date="2012" name="Plant J.">
        <title>Crinkly4 receptor-like kinase is required to maintain the interlocking of the palea and lemma, and fertility in rice, by promoting epidermal cell differentiation.</title>
        <authorList>
            <person name="Pu C.-X."/>
            <person name="Ma Y."/>
            <person name="Wang J."/>
            <person name="Zhang Y.-C."/>
            <person name="Jiao X.-W."/>
            <person name="Hu Y.-H."/>
            <person name="Wang L.-L."/>
            <person name="Zhu Z.-G."/>
            <person name="Sun D."/>
            <person name="Sun Y."/>
        </authorList>
    </citation>
    <scope>FUNCTION</scope>
    <scope>DISRUPTION PHENOTYPE</scope>
    <scope>TISSUE SPECIFICITY</scope>
    <scope>DEVELOPMENTAL STAGE</scope>
</reference>
<reference key="8">
    <citation type="journal article" date="2012" name="Plant Signal. Behav.">
        <title>Rice Crinkly4 receptor-like kinase positively regulates culm elongation and amino acid K532 is not essential for its kinase activity.</title>
        <authorList>
            <person name="Pu C.-X."/>
            <person name="Sun Y."/>
        </authorList>
    </citation>
    <scope>FUNCTION</scope>
    <scope>DISRUPTION PHENOTYPE</scope>
    <scope>MUTAGENESIS OF LYS-532</scope>
    <scope>CATALYTIC ACTIVITY</scope>
    <scope>AUTOPHOSPHORYLATION</scope>
</reference>
<reference key="9">
    <citation type="journal article" date="2014" name="Plant Physiol.">
        <title>OsmiR396d-regulated OsGRFs function in floral organogenesis in rice through binding to their targets OsJMJ706 and OsCR4.</title>
        <authorList>
            <person name="Liu H."/>
            <person name="Guo S."/>
            <person name="Xu Y."/>
            <person name="Li C."/>
            <person name="Zhang Z."/>
            <person name="Zhang D."/>
            <person name="Xu S."/>
            <person name="Zhang C."/>
            <person name="Chong K."/>
        </authorList>
    </citation>
    <scope>INDUCTION BY GRF10 AND GRF6</scope>
    <source>
        <strain>cv. Zhonghua 10</strain>
    </source>
</reference>
<protein>
    <recommendedName>
        <fullName evidence="2">Serine/threonine-protein kinase-like protein CR4</fullName>
        <ecNumber evidence="9">2.7.11.1</ecNumber>
    </recommendedName>
    <alternativeName>
        <fullName evidence="11">Protein CRINKLY 4</fullName>
        <shortName evidence="11">OsCR4</shortName>
    </alternativeName>
</protein>
<proteinExistence type="evidence at protein level"/>
<gene>
    <name evidence="11" type="primary">CR4</name>
    <name evidence="13" type="ordered locus">LOC_Os03g43670</name>
    <name evidence="14" type="ordered locus">Os03g0637800</name>
    <name evidence="12" type="ORF">OSJNBa0066H15.11</name>
    <name evidence="15" type="ORF">OSNPB_030637800</name>
</gene>
<dbReference type="EC" id="2.7.11.1" evidence="9"/>
<dbReference type="EMBL" id="AB057787">
    <property type="protein sequence ID" value="BAB68389.1"/>
    <property type="molecule type" value="Genomic_DNA"/>
</dbReference>
<dbReference type="EMBL" id="AC120505">
    <property type="protein sequence ID" value="AAR01745.1"/>
    <property type="molecule type" value="Genomic_DNA"/>
</dbReference>
<dbReference type="EMBL" id="DP000009">
    <property type="protein sequence ID" value="ABF97796.1"/>
    <property type="molecule type" value="Genomic_DNA"/>
</dbReference>
<dbReference type="EMBL" id="AP008209">
    <property type="protein sequence ID" value="BAF12640.1"/>
    <property type="molecule type" value="Genomic_DNA"/>
</dbReference>
<dbReference type="EMBL" id="AP014959">
    <property type="protein sequence ID" value="BAS85402.1"/>
    <property type="molecule type" value="Genomic_DNA"/>
</dbReference>
<dbReference type="RefSeq" id="XP_015628681.1">
    <property type="nucleotide sequence ID" value="XM_015773195.1"/>
</dbReference>
<dbReference type="SMR" id="Q75J39"/>
<dbReference type="FunCoup" id="Q75J39">
    <property type="interactions" value="2271"/>
</dbReference>
<dbReference type="STRING" id="39947.Q75J39"/>
<dbReference type="GlyCosmos" id="Q75J39">
    <property type="glycosylation" value="4 sites, No reported glycans"/>
</dbReference>
<dbReference type="iPTMnet" id="Q75J39"/>
<dbReference type="PaxDb" id="39947-Q75J39"/>
<dbReference type="EnsemblPlants" id="Os03t0637800-01">
    <property type="protein sequence ID" value="Os03t0637800-01"/>
    <property type="gene ID" value="Os03g0637800"/>
</dbReference>
<dbReference type="Gramene" id="Os03t0637800-01">
    <property type="protein sequence ID" value="Os03t0637800-01"/>
    <property type="gene ID" value="Os03g0637800"/>
</dbReference>
<dbReference type="KEGG" id="dosa:Os03g0637800"/>
<dbReference type="eggNOG" id="ENOG502QUN0">
    <property type="taxonomic scope" value="Eukaryota"/>
</dbReference>
<dbReference type="HOGENOM" id="CLU_009948_0_0_1"/>
<dbReference type="InParanoid" id="Q75J39"/>
<dbReference type="OMA" id="TPAHFPF"/>
<dbReference type="OrthoDB" id="1895016at2759"/>
<dbReference type="Proteomes" id="UP000000763">
    <property type="component" value="Chromosome 3"/>
</dbReference>
<dbReference type="Proteomes" id="UP000059680">
    <property type="component" value="Chromosome 3"/>
</dbReference>
<dbReference type="GO" id="GO:0009986">
    <property type="term" value="C:cell surface"/>
    <property type="evidence" value="ECO:0007669"/>
    <property type="project" value="EnsemblPlants"/>
</dbReference>
<dbReference type="GO" id="GO:0030139">
    <property type="term" value="C:endocytic vesicle"/>
    <property type="evidence" value="ECO:0007669"/>
    <property type="project" value="EnsemblPlants"/>
</dbReference>
<dbReference type="GO" id="GO:0032585">
    <property type="term" value="C:multivesicular body membrane"/>
    <property type="evidence" value="ECO:0007669"/>
    <property type="project" value="UniProtKB-SubCell"/>
</dbReference>
<dbReference type="GO" id="GO:0005886">
    <property type="term" value="C:plasma membrane"/>
    <property type="evidence" value="ECO:0007669"/>
    <property type="project" value="UniProtKB-SubCell"/>
</dbReference>
<dbReference type="GO" id="GO:0005524">
    <property type="term" value="F:ATP binding"/>
    <property type="evidence" value="ECO:0007669"/>
    <property type="project" value="UniProtKB-KW"/>
</dbReference>
<dbReference type="GO" id="GO:0042803">
    <property type="term" value="F:protein homodimerization activity"/>
    <property type="evidence" value="ECO:0007669"/>
    <property type="project" value="EnsemblPlants"/>
</dbReference>
<dbReference type="GO" id="GO:0004672">
    <property type="term" value="F:protein kinase activity"/>
    <property type="evidence" value="ECO:0000314"/>
    <property type="project" value="UniProtKB"/>
</dbReference>
<dbReference type="GO" id="GO:0106310">
    <property type="term" value="F:protein serine kinase activity"/>
    <property type="evidence" value="ECO:0007669"/>
    <property type="project" value="RHEA"/>
</dbReference>
<dbReference type="GO" id="GO:0004674">
    <property type="term" value="F:protein serine/threonine kinase activity"/>
    <property type="evidence" value="ECO:0007669"/>
    <property type="project" value="UniProtKB-KW"/>
</dbReference>
<dbReference type="GO" id="GO:0009793">
    <property type="term" value="P:embryo development ending in seed dormancy"/>
    <property type="evidence" value="ECO:0007669"/>
    <property type="project" value="EnsemblPlants"/>
</dbReference>
<dbReference type="GO" id="GO:0048439">
    <property type="term" value="P:flower morphogenesis"/>
    <property type="evidence" value="ECO:0000315"/>
    <property type="project" value="UniProtKB"/>
</dbReference>
<dbReference type="GO" id="GO:0010311">
    <property type="term" value="P:lateral root formation"/>
    <property type="evidence" value="ECO:0007669"/>
    <property type="project" value="EnsemblPlants"/>
</dbReference>
<dbReference type="GO" id="GO:0090627">
    <property type="term" value="P:plant epidermal cell differentiation"/>
    <property type="evidence" value="ECO:0000315"/>
    <property type="project" value="UniProtKB"/>
</dbReference>
<dbReference type="GO" id="GO:0099402">
    <property type="term" value="P:plant organ development"/>
    <property type="evidence" value="ECO:0000315"/>
    <property type="project" value="UniProtKB"/>
</dbReference>
<dbReference type="GO" id="GO:0032877">
    <property type="term" value="P:positive regulation of DNA endoreduplication"/>
    <property type="evidence" value="ECO:0007669"/>
    <property type="project" value="EnsemblPlants"/>
</dbReference>
<dbReference type="GO" id="GO:0046777">
    <property type="term" value="P:protein autophosphorylation"/>
    <property type="evidence" value="ECO:0000314"/>
    <property type="project" value="UniProtKB"/>
</dbReference>
<dbReference type="GO" id="GO:0009786">
    <property type="term" value="P:regulation of asymmetric cell division"/>
    <property type="evidence" value="ECO:0007669"/>
    <property type="project" value="EnsemblPlants"/>
</dbReference>
<dbReference type="GO" id="GO:0048829">
    <property type="term" value="P:root cap development"/>
    <property type="evidence" value="ECO:0007669"/>
    <property type="project" value="EnsemblPlants"/>
</dbReference>
<dbReference type="GO" id="GO:0090392">
    <property type="term" value="P:sepal giant cell differentiation"/>
    <property type="evidence" value="ECO:0007669"/>
    <property type="project" value="EnsemblPlants"/>
</dbReference>
<dbReference type="CDD" id="cd14066">
    <property type="entry name" value="STKc_IRAK"/>
    <property type="match status" value="1"/>
</dbReference>
<dbReference type="FunFam" id="1.10.510.10:FF:000477">
    <property type="entry name" value="Receptor protein kinase CRINKLY4"/>
    <property type="match status" value="1"/>
</dbReference>
<dbReference type="FunFam" id="3.30.200.20:FF:000357">
    <property type="entry name" value="serine/threonine-protein kinase-like protein CCR1"/>
    <property type="match status" value="1"/>
</dbReference>
<dbReference type="FunFam" id="2.130.10.30:FF:000044">
    <property type="entry name" value="Serine/threonine-protein kinase-like protein CR4"/>
    <property type="match status" value="1"/>
</dbReference>
<dbReference type="FunFam" id="2.130.10.30:FF:000069">
    <property type="entry name" value="Serine/threonine-protein kinase-like protein CR4"/>
    <property type="match status" value="1"/>
</dbReference>
<dbReference type="Gene3D" id="3.30.200.20">
    <property type="entry name" value="Phosphorylase Kinase, domain 1"/>
    <property type="match status" value="1"/>
</dbReference>
<dbReference type="Gene3D" id="2.130.10.30">
    <property type="entry name" value="Regulator of chromosome condensation 1/beta-lactamase-inhibitor protein II"/>
    <property type="match status" value="2"/>
</dbReference>
<dbReference type="Gene3D" id="1.10.510.10">
    <property type="entry name" value="Transferase(Phosphotransferase) domain 1"/>
    <property type="match status" value="1"/>
</dbReference>
<dbReference type="InterPro" id="IPR011009">
    <property type="entry name" value="Kinase-like_dom_sf"/>
</dbReference>
<dbReference type="InterPro" id="IPR000719">
    <property type="entry name" value="Prot_kinase_dom"/>
</dbReference>
<dbReference type="InterPro" id="IPR017441">
    <property type="entry name" value="Protein_kinase_ATP_BS"/>
</dbReference>
<dbReference type="InterPro" id="IPR009091">
    <property type="entry name" value="RCC1/BLIP-II"/>
</dbReference>
<dbReference type="InterPro" id="IPR000408">
    <property type="entry name" value="Reg_chr_condens"/>
</dbReference>
<dbReference type="InterPro" id="IPR001245">
    <property type="entry name" value="Ser-Thr/Tyr_kinase_cat_dom"/>
</dbReference>
<dbReference type="InterPro" id="IPR008271">
    <property type="entry name" value="Ser/Thr_kinase_AS"/>
</dbReference>
<dbReference type="InterPro" id="IPR001368">
    <property type="entry name" value="TNFR/NGFR_Cys_rich_reg"/>
</dbReference>
<dbReference type="PANTHER" id="PTHR47460">
    <property type="entry name" value="SERINE/THREONINE-PROTEIN KINASE-LIKE PROTEIN ACR4"/>
    <property type="match status" value="1"/>
</dbReference>
<dbReference type="PANTHER" id="PTHR47460:SF1">
    <property type="entry name" value="SERINE_THREONINE-PROTEIN KINASE-LIKE PROTEIN ACR4"/>
    <property type="match status" value="1"/>
</dbReference>
<dbReference type="Pfam" id="PF07714">
    <property type="entry name" value="PK_Tyr_Ser-Thr"/>
    <property type="match status" value="1"/>
</dbReference>
<dbReference type="Pfam" id="PF13540">
    <property type="entry name" value="RCC1_2"/>
    <property type="match status" value="1"/>
</dbReference>
<dbReference type="SMART" id="SM00220">
    <property type="entry name" value="S_TKc"/>
    <property type="match status" value="1"/>
</dbReference>
<dbReference type="SMART" id="SM00208">
    <property type="entry name" value="TNFR"/>
    <property type="match status" value="1"/>
</dbReference>
<dbReference type="SUPFAM" id="SSF56112">
    <property type="entry name" value="Protein kinase-like (PK-like)"/>
    <property type="match status" value="1"/>
</dbReference>
<dbReference type="SUPFAM" id="SSF50985">
    <property type="entry name" value="RCC1/BLIP-II"/>
    <property type="match status" value="1"/>
</dbReference>
<dbReference type="PROSITE" id="PS00107">
    <property type="entry name" value="PROTEIN_KINASE_ATP"/>
    <property type="match status" value="1"/>
</dbReference>
<dbReference type="PROSITE" id="PS50011">
    <property type="entry name" value="PROTEIN_KINASE_DOM"/>
    <property type="match status" value="1"/>
</dbReference>
<dbReference type="PROSITE" id="PS00108">
    <property type="entry name" value="PROTEIN_KINASE_ST"/>
    <property type="match status" value="1"/>
</dbReference>
<dbReference type="PROSITE" id="PS50050">
    <property type="entry name" value="TNFR_NGFR_2"/>
    <property type="match status" value="1"/>
</dbReference>
<sequence length="901" mass="97772">MDIVPVVALCCCLVLLPSWAYGLGSMASIAVSYGEDGPVFCGLNSDGSHLVTCFGADASVVYGAPSRIPFVGVTAGDGFACGLLLDTNQPYCWGSNSYVKIGVPQPMVEGAMYSELSAGDNHLCALRTSVKGFHSVNGDTSVIDCWGYNMTATHTVTGAVSAISAGSVFNCGLFARNRTVFCWGDESVSGVIGLAPRNVRFQSIGAGGYHVCGVLENAQVFCWGRSLEMQQMSTPSSTDDGDVNIVPMDAMVSVVGGRFHACGIRSLDHQVACWGFTLQNSTLAPKGLRVYAIVAGDYFTCGVPAETSLKPMCWGHSGPLALPMAVSPGICVSDSCSHGYYEYANHGEVGSGSKTCKPANSRLCLPCSVGCPDDSYESSPCNATADRVCQFDCSKCASDECVSFCLSQKRTKNRKFMAFQLRIFVAEIAFAVILVFSVTAIACLYVRYKLRHCQCSKNELRLAKNTTYSFRKDNMKIQPDVEDLKIRRAQEFSYEELEQATGGFSEDSQVGKGSFSCVFKGILRDGTVVAVKRAIKASDVKKSSKEFHTELDLLSRLNHAHLLNLLGYCEDGSERLLVYEFMAHGSLYQHLHGKDPNLKKRLNWARRVTIAVQAARGIEYLHGYACPPVIHRDIKSSNILIDEDHNARVADFGLSILGPADSGTPLSELPAGTLGYLDPEYYRLHYLTTKSDVYSFGVVLLEILSGRKAIDMQFEEGNIVEWAVPLIKAGDISALLDPVLSPPSDLEALKKIAAVACKCVRMRAKDRPSMDKVTTALERALALLMGSPCIEQPILPTEVVLGSSRMHKKVSQRSSNHSCSENDLVDGDDQRIEYRAPSWITFPSVTSSQRRKSSASEADMDGRTTTDGRNVGSSIGDGLRSLEEEISPASPQENLYLQHNF</sequence>
<organism>
    <name type="scientific">Oryza sativa subsp. japonica</name>
    <name type="common">Rice</name>
    <dbReference type="NCBI Taxonomy" id="39947"/>
    <lineage>
        <taxon>Eukaryota</taxon>
        <taxon>Viridiplantae</taxon>
        <taxon>Streptophyta</taxon>
        <taxon>Embryophyta</taxon>
        <taxon>Tracheophyta</taxon>
        <taxon>Spermatophyta</taxon>
        <taxon>Magnoliopsida</taxon>
        <taxon>Liliopsida</taxon>
        <taxon>Poales</taxon>
        <taxon>Poaceae</taxon>
        <taxon>BOP clade</taxon>
        <taxon>Oryzoideae</taxon>
        <taxon>Oryzeae</taxon>
        <taxon>Oryzinae</taxon>
        <taxon>Oryza</taxon>
        <taxon>Oryza sativa</taxon>
    </lineage>
</organism>
<feature type="signal peptide" evidence="3">
    <location>
        <begin position="1"/>
        <end position="22"/>
    </location>
</feature>
<feature type="chain" id="PRO_5007710260" description="Serine/threonine-protein kinase-like protein CR4">
    <location>
        <begin position="23"/>
        <end position="901"/>
    </location>
</feature>
<feature type="transmembrane region" description="Helical" evidence="3">
    <location>
        <begin position="423"/>
        <end position="443"/>
    </location>
</feature>
<feature type="repeat" description="1" evidence="1">
    <location>
        <begin position="31"/>
        <end position="66"/>
    </location>
</feature>
<feature type="repeat" description="2" evidence="1">
    <location>
        <begin position="70"/>
        <end position="105"/>
    </location>
</feature>
<feature type="repeat" description="3" evidence="1">
    <location>
        <begin position="123"/>
        <end position="158"/>
    </location>
</feature>
<feature type="repeat" description="4" evidence="1">
    <location>
        <begin position="160"/>
        <end position="193"/>
    </location>
</feature>
<feature type="repeat" description="5" evidence="1">
    <location>
        <begin position="201"/>
        <end position="234"/>
    </location>
</feature>
<feature type="repeat" description="6" evidence="1">
    <location>
        <begin position="251"/>
        <end position="285"/>
    </location>
</feature>
<feature type="repeat" description="7" evidence="1">
    <location>
        <begin position="290"/>
        <end position="328"/>
    </location>
</feature>
<feature type="repeat" description="TNFR-Cys" evidence="5">
    <location>
        <begin position="335"/>
        <end position="389"/>
    </location>
</feature>
<feature type="domain" description="Protein kinase" evidence="4">
    <location>
        <begin position="504"/>
        <end position="781"/>
    </location>
</feature>
<feature type="region of interest" description="7 X 36 AA repeats" evidence="1">
    <location>
        <begin position="31"/>
        <end position="328"/>
    </location>
</feature>
<feature type="region of interest" description="Disordered" evidence="7">
    <location>
        <begin position="845"/>
        <end position="901"/>
    </location>
</feature>
<feature type="compositionally biased region" description="Polar residues" evidence="7">
    <location>
        <begin position="889"/>
        <end position="901"/>
    </location>
</feature>
<feature type="active site" description="Proton acceptor" evidence="4">
    <location>
        <position position="633"/>
    </location>
</feature>
<feature type="binding site" evidence="4">
    <location>
        <begin position="510"/>
        <end position="518"/>
    </location>
    <ligand>
        <name>ATP</name>
        <dbReference type="ChEBI" id="CHEBI:30616"/>
    </ligand>
</feature>
<feature type="binding site" evidence="4">
    <location>
        <position position="532"/>
    </location>
    <ligand>
        <name>ATP</name>
        <dbReference type="ChEBI" id="CHEBI:30616"/>
    </ligand>
</feature>
<feature type="glycosylation site" description="N-linked (GlcNAc...) asparagine" evidence="6">
    <location>
        <position position="149"/>
    </location>
</feature>
<feature type="glycosylation site" description="N-linked (GlcNAc...) asparagine" evidence="6">
    <location>
        <position position="177"/>
    </location>
</feature>
<feature type="glycosylation site" description="N-linked (GlcNAc...) asparagine" evidence="6">
    <location>
        <position position="280"/>
    </location>
</feature>
<feature type="glycosylation site" description="N-linked (GlcNAc...) asparagine" evidence="6">
    <location>
        <position position="382"/>
    </location>
</feature>
<feature type="disulfide bond" evidence="5">
    <location>
        <begin position="336"/>
        <end position="364"/>
    </location>
</feature>
<feature type="disulfide bond" evidence="5">
    <location>
        <begin position="367"/>
        <end position="381"/>
    </location>
</feature>
<feature type="disulfide bond" evidence="5">
    <location>
        <begin position="371"/>
        <end position="389"/>
    </location>
</feature>
<feature type="mutagenesis site" description="Normal autophosphorylation." evidence="9">
    <original>K</original>
    <variation>M</variation>
    <location>
        <position position="532"/>
    </location>
</feature>
<keyword id="KW-0067">ATP-binding</keyword>
<keyword id="KW-1003">Cell membrane</keyword>
<keyword id="KW-0217">Developmental protein</keyword>
<keyword id="KW-1015">Disulfide bond</keyword>
<keyword id="KW-0967">Endosome</keyword>
<keyword id="KW-0325">Glycoprotein</keyword>
<keyword id="KW-0418">Kinase</keyword>
<keyword id="KW-0472">Membrane</keyword>
<keyword id="KW-0547">Nucleotide-binding</keyword>
<keyword id="KW-0675">Receptor</keyword>
<keyword id="KW-1185">Reference proteome</keyword>
<keyword id="KW-0677">Repeat</keyword>
<keyword id="KW-0723">Serine/threonine-protein kinase</keyword>
<keyword id="KW-0732">Signal</keyword>
<keyword id="KW-0808">Transferase</keyword>
<keyword id="KW-0812">Transmembrane</keyword>
<keyword id="KW-1133">Transmembrane helix</keyword>
<evidence type="ECO:0000250" key="1">
    <source>
        <dbReference type="UniProtKB" id="O24585"/>
    </source>
</evidence>
<evidence type="ECO:0000250" key="2">
    <source>
        <dbReference type="UniProtKB" id="Q9LX29"/>
    </source>
</evidence>
<evidence type="ECO:0000255" key="3"/>
<evidence type="ECO:0000255" key="4">
    <source>
        <dbReference type="PROSITE-ProRule" id="PRU00159"/>
    </source>
</evidence>
<evidence type="ECO:0000255" key="5">
    <source>
        <dbReference type="PROSITE-ProRule" id="PRU00206"/>
    </source>
</evidence>
<evidence type="ECO:0000255" key="6">
    <source>
        <dbReference type="PROSITE-ProRule" id="PRU00498"/>
    </source>
</evidence>
<evidence type="ECO:0000256" key="7">
    <source>
        <dbReference type="SAM" id="MobiDB-lite"/>
    </source>
</evidence>
<evidence type="ECO:0000269" key="8">
    <source>
    </source>
</evidence>
<evidence type="ECO:0000269" key="9">
    <source>
    </source>
</evidence>
<evidence type="ECO:0000269" key="10">
    <source>
    </source>
</evidence>
<evidence type="ECO:0000303" key="11">
    <source ref="1"/>
</evidence>
<evidence type="ECO:0000312" key="12">
    <source>
        <dbReference type="EMBL" id="AAR01745.1"/>
    </source>
</evidence>
<evidence type="ECO:0000312" key="13">
    <source>
        <dbReference type="EMBL" id="ABF97796.1"/>
    </source>
</evidence>
<evidence type="ECO:0000312" key="14">
    <source>
        <dbReference type="EMBL" id="BAF12640.1"/>
    </source>
</evidence>
<evidence type="ECO:0000312" key="15">
    <source>
        <dbReference type="EMBL" id="BAS85402.1"/>
    </source>
</evidence>
<comment type="function">
    <text evidence="1 2 8 9">Receptor protein kinase (PubMed:22899082). Could play a role in a differentiation signal (By similarity). Controls formative cell division in meristems (By similarity). Regulates epidermal cell differentiation in many organs (PubMed:22332708, PubMed:22899082). During floral organogenesis, required to maintain the interlocking of the palea and lemma, and fertility (PubMed:22332708). Triggers culm elongation (PubMed:22899082).</text>
</comment>
<comment type="catalytic activity">
    <reaction evidence="9">
        <text>L-seryl-[protein] + ATP = O-phospho-L-seryl-[protein] + ADP + H(+)</text>
        <dbReference type="Rhea" id="RHEA:17989"/>
        <dbReference type="Rhea" id="RHEA-COMP:9863"/>
        <dbReference type="Rhea" id="RHEA-COMP:11604"/>
        <dbReference type="ChEBI" id="CHEBI:15378"/>
        <dbReference type="ChEBI" id="CHEBI:29999"/>
        <dbReference type="ChEBI" id="CHEBI:30616"/>
        <dbReference type="ChEBI" id="CHEBI:83421"/>
        <dbReference type="ChEBI" id="CHEBI:456216"/>
        <dbReference type="EC" id="2.7.11.1"/>
    </reaction>
</comment>
<comment type="catalytic activity">
    <reaction evidence="9">
        <text>L-threonyl-[protein] + ATP = O-phospho-L-threonyl-[protein] + ADP + H(+)</text>
        <dbReference type="Rhea" id="RHEA:46608"/>
        <dbReference type="Rhea" id="RHEA-COMP:11060"/>
        <dbReference type="Rhea" id="RHEA-COMP:11605"/>
        <dbReference type="ChEBI" id="CHEBI:15378"/>
        <dbReference type="ChEBI" id="CHEBI:30013"/>
        <dbReference type="ChEBI" id="CHEBI:30616"/>
        <dbReference type="ChEBI" id="CHEBI:61977"/>
        <dbReference type="ChEBI" id="CHEBI:456216"/>
        <dbReference type="EC" id="2.7.11.1"/>
    </reaction>
</comment>
<comment type="subunit">
    <text evidence="2">Homodimer.</text>
</comment>
<comment type="subcellular location">
    <subcellularLocation>
        <location evidence="2">Cell membrane</location>
        <topology evidence="3">Single-pass type I membrane protein</topology>
    </subcellularLocation>
    <subcellularLocation>
        <location evidence="2">Endosome</location>
        <location evidence="2">Multivesicular body membrane</location>
        <topology evidence="3">Single-pass type I membrane protein</topology>
    </subcellularLocation>
    <text evidence="2">Also localized into protein export bodies.</text>
</comment>
<comment type="tissue specificity">
    <text evidence="8">Specifically expressed in the epidermal cells of paleas and lemmas.</text>
</comment>
<comment type="developmental stage">
    <text evidence="8">Highly expressed in young vegetative and reproductive tissues, including calli, roots, seedlings, internodes, leaf blades and coleoptiles as well as young panicles and kernels. But low levels in 3-week-old sheaths and reproductive organs. During early spikelet development, accumulates in inflorescences, especially in the outermost cell layers. Present strongly in the palea and lemma epidermal cell layers, mostly at the position of the interlock. Also observed in reproductive organs, such as stigmas, stamens, lodicules, young kernels and seed coats.</text>
</comment>
<comment type="induction">
    <text evidence="10">Regulated by GRF10 and GRF6 at the transcription level in floral organs during floret development.</text>
</comment>
<comment type="PTM">
    <text evidence="9">Autophosphorylated.</text>
</comment>
<comment type="disruption phenotype">
    <text evidence="8 9">Abnormal epidermis cells walls with discontinuous cuticles, leading to irregular architecture and organ self-fusion resulting in distorted interlocking structures of the palea and lemma which accumulates abnormal levels of anthocyanin after heading. Delayed separation of the palea and lemma at later spikelet stages. Severe interruption of pistil pollination and damage to the development of embryo and endosperm, with defects in aleurone and reduced seed fertility (PubMed:22332708). Reduced stature due to shorter primary and lateral tillers (PubMed:22899082).</text>
</comment>
<comment type="similarity">
    <text evidence="4">Belongs to the protein kinase superfamily. Ser/Thr protein kinase family.</text>
</comment>